<protein>
    <recommendedName>
        <fullName evidence="1">Holliday junction branch migration complex subunit RuvB</fullName>
        <ecNumber evidence="1">3.6.4.-</ecNumber>
    </recommendedName>
</protein>
<gene>
    <name evidence="1" type="primary">ruvB</name>
    <name type="ordered locus">BF0163</name>
</gene>
<organism>
    <name type="scientific">Bacteroides fragilis (strain YCH46)</name>
    <dbReference type="NCBI Taxonomy" id="295405"/>
    <lineage>
        <taxon>Bacteria</taxon>
        <taxon>Pseudomonadati</taxon>
        <taxon>Bacteroidota</taxon>
        <taxon>Bacteroidia</taxon>
        <taxon>Bacteroidales</taxon>
        <taxon>Bacteroidaceae</taxon>
        <taxon>Bacteroides</taxon>
    </lineage>
</organism>
<dbReference type="EC" id="3.6.4.-" evidence="1"/>
<dbReference type="EMBL" id="AP006841">
    <property type="protein sequence ID" value="BAD46912.1"/>
    <property type="molecule type" value="Genomic_DNA"/>
</dbReference>
<dbReference type="RefSeq" id="WP_005783731.1">
    <property type="nucleotide sequence ID" value="NZ_UYXF01000025.1"/>
</dbReference>
<dbReference type="RefSeq" id="YP_097446.1">
    <property type="nucleotide sequence ID" value="NC_006347.1"/>
</dbReference>
<dbReference type="SMR" id="Q650B4"/>
<dbReference type="STRING" id="295405.BF0163"/>
<dbReference type="GeneID" id="60368686"/>
<dbReference type="KEGG" id="bfr:BF0163"/>
<dbReference type="PATRIC" id="fig|295405.11.peg.195"/>
<dbReference type="HOGENOM" id="CLU_055599_1_0_10"/>
<dbReference type="OrthoDB" id="9804478at2"/>
<dbReference type="Proteomes" id="UP000002197">
    <property type="component" value="Chromosome"/>
</dbReference>
<dbReference type="GO" id="GO:0005737">
    <property type="term" value="C:cytoplasm"/>
    <property type="evidence" value="ECO:0007669"/>
    <property type="project" value="UniProtKB-SubCell"/>
</dbReference>
<dbReference type="GO" id="GO:0048476">
    <property type="term" value="C:Holliday junction resolvase complex"/>
    <property type="evidence" value="ECO:0007669"/>
    <property type="project" value="UniProtKB-UniRule"/>
</dbReference>
<dbReference type="GO" id="GO:0005524">
    <property type="term" value="F:ATP binding"/>
    <property type="evidence" value="ECO:0007669"/>
    <property type="project" value="UniProtKB-UniRule"/>
</dbReference>
<dbReference type="GO" id="GO:0016887">
    <property type="term" value="F:ATP hydrolysis activity"/>
    <property type="evidence" value="ECO:0007669"/>
    <property type="project" value="InterPro"/>
</dbReference>
<dbReference type="GO" id="GO:0000400">
    <property type="term" value="F:four-way junction DNA binding"/>
    <property type="evidence" value="ECO:0007669"/>
    <property type="project" value="UniProtKB-UniRule"/>
</dbReference>
<dbReference type="GO" id="GO:0009378">
    <property type="term" value="F:four-way junction helicase activity"/>
    <property type="evidence" value="ECO:0007669"/>
    <property type="project" value="InterPro"/>
</dbReference>
<dbReference type="GO" id="GO:0006310">
    <property type="term" value="P:DNA recombination"/>
    <property type="evidence" value="ECO:0007669"/>
    <property type="project" value="UniProtKB-UniRule"/>
</dbReference>
<dbReference type="GO" id="GO:0006281">
    <property type="term" value="P:DNA repair"/>
    <property type="evidence" value="ECO:0007669"/>
    <property type="project" value="UniProtKB-UniRule"/>
</dbReference>
<dbReference type="CDD" id="cd00009">
    <property type="entry name" value="AAA"/>
    <property type="match status" value="1"/>
</dbReference>
<dbReference type="Gene3D" id="1.10.8.60">
    <property type="match status" value="1"/>
</dbReference>
<dbReference type="Gene3D" id="3.40.50.300">
    <property type="entry name" value="P-loop containing nucleotide triphosphate hydrolases"/>
    <property type="match status" value="1"/>
</dbReference>
<dbReference type="Gene3D" id="1.10.10.10">
    <property type="entry name" value="Winged helix-like DNA-binding domain superfamily/Winged helix DNA-binding domain"/>
    <property type="match status" value="1"/>
</dbReference>
<dbReference type="HAMAP" id="MF_00016">
    <property type="entry name" value="DNA_HJ_migration_RuvB"/>
    <property type="match status" value="1"/>
</dbReference>
<dbReference type="InterPro" id="IPR003593">
    <property type="entry name" value="AAA+_ATPase"/>
</dbReference>
<dbReference type="InterPro" id="IPR041445">
    <property type="entry name" value="AAA_lid_4"/>
</dbReference>
<dbReference type="InterPro" id="IPR004605">
    <property type="entry name" value="DNA_helicase_Holl-junc_RuvB"/>
</dbReference>
<dbReference type="InterPro" id="IPR027417">
    <property type="entry name" value="P-loop_NTPase"/>
</dbReference>
<dbReference type="InterPro" id="IPR008824">
    <property type="entry name" value="RuvB-like_N"/>
</dbReference>
<dbReference type="InterPro" id="IPR008823">
    <property type="entry name" value="RuvB_C"/>
</dbReference>
<dbReference type="InterPro" id="IPR036388">
    <property type="entry name" value="WH-like_DNA-bd_sf"/>
</dbReference>
<dbReference type="InterPro" id="IPR036390">
    <property type="entry name" value="WH_DNA-bd_sf"/>
</dbReference>
<dbReference type="NCBIfam" id="NF000868">
    <property type="entry name" value="PRK00080.1"/>
    <property type="match status" value="1"/>
</dbReference>
<dbReference type="NCBIfam" id="TIGR00635">
    <property type="entry name" value="ruvB"/>
    <property type="match status" value="1"/>
</dbReference>
<dbReference type="PANTHER" id="PTHR42848">
    <property type="match status" value="1"/>
</dbReference>
<dbReference type="PANTHER" id="PTHR42848:SF1">
    <property type="entry name" value="HOLLIDAY JUNCTION BRANCH MIGRATION COMPLEX SUBUNIT RUVB"/>
    <property type="match status" value="1"/>
</dbReference>
<dbReference type="Pfam" id="PF17864">
    <property type="entry name" value="AAA_lid_4"/>
    <property type="match status" value="1"/>
</dbReference>
<dbReference type="Pfam" id="PF05491">
    <property type="entry name" value="RuvB_C"/>
    <property type="match status" value="1"/>
</dbReference>
<dbReference type="Pfam" id="PF05496">
    <property type="entry name" value="RuvB_N"/>
    <property type="match status" value="1"/>
</dbReference>
<dbReference type="SMART" id="SM00382">
    <property type="entry name" value="AAA"/>
    <property type="match status" value="1"/>
</dbReference>
<dbReference type="SUPFAM" id="SSF52540">
    <property type="entry name" value="P-loop containing nucleoside triphosphate hydrolases"/>
    <property type="match status" value="1"/>
</dbReference>
<dbReference type="SUPFAM" id="SSF46785">
    <property type="entry name" value="Winged helix' DNA-binding domain"/>
    <property type="match status" value="1"/>
</dbReference>
<evidence type="ECO:0000255" key="1">
    <source>
        <dbReference type="HAMAP-Rule" id="MF_00016"/>
    </source>
</evidence>
<keyword id="KW-0067">ATP-binding</keyword>
<keyword id="KW-0963">Cytoplasm</keyword>
<keyword id="KW-0227">DNA damage</keyword>
<keyword id="KW-0233">DNA recombination</keyword>
<keyword id="KW-0234">DNA repair</keyword>
<keyword id="KW-0238">DNA-binding</keyword>
<keyword id="KW-0378">Hydrolase</keyword>
<keyword id="KW-0547">Nucleotide-binding</keyword>
<reference key="1">
    <citation type="journal article" date="2004" name="Proc. Natl. Acad. Sci. U.S.A.">
        <title>Genomic analysis of Bacteroides fragilis reveals extensive DNA inversions regulating cell surface adaptation.</title>
        <authorList>
            <person name="Kuwahara T."/>
            <person name="Yamashita A."/>
            <person name="Hirakawa H."/>
            <person name="Nakayama H."/>
            <person name="Toh H."/>
            <person name="Okada N."/>
            <person name="Kuhara S."/>
            <person name="Hattori M."/>
            <person name="Hayashi T."/>
            <person name="Ohnishi Y."/>
        </authorList>
    </citation>
    <scope>NUCLEOTIDE SEQUENCE [LARGE SCALE GENOMIC DNA]</scope>
    <source>
        <strain>YCH46</strain>
    </source>
</reference>
<accession>Q650B4</accession>
<comment type="function">
    <text evidence="1">The RuvA-RuvB-RuvC complex processes Holliday junction (HJ) DNA during genetic recombination and DNA repair, while the RuvA-RuvB complex plays an important role in the rescue of blocked DNA replication forks via replication fork reversal (RFR). RuvA specifically binds to HJ cruciform DNA, conferring on it an open structure. The RuvB hexamer acts as an ATP-dependent pump, pulling dsDNA into and through the RuvAB complex. RuvB forms 2 homohexamers on either side of HJ DNA bound by 1 or 2 RuvA tetramers; 4 subunits per hexamer contact DNA at a time. Coordinated motions by a converter formed by DNA-disengaged RuvB subunits stimulates ATP hydrolysis and nucleotide exchange. Immobilization of the converter enables RuvB to convert the ATP-contained energy into a lever motion, pulling 2 nucleotides of DNA out of the RuvA tetramer per ATP hydrolyzed, thus driving DNA branch migration. The RuvB motors rotate together with the DNA substrate, which together with the progressing nucleotide cycle form the mechanistic basis for DNA recombination by continuous HJ branch migration. Branch migration allows RuvC to scan DNA until it finds its consensus sequence, where it cleaves and resolves cruciform DNA.</text>
</comment>
<comment type="catalytic activity">
    <reaction evidence="1">
        <text>ATP + H2O = ADP + phosphate + H(+)</text>
        <dbReference type="Rhea" id="RHEA:13065"/>
        <dbReference type="ChEBI" id="CHEBI:15377"/>
        <dbReference type="ChEBI" id="CHEBI:15378"/>
        <dbReference type="ChEBI" id="CHEBI:30616"/>
        <dbReference type="ChEBI" id="CHEBI:43474"/>
        <dbReference type="ChEBI" id="CHEBI:456216"/>
    </reaction>
</comment>
<comment type="subunit">
    <text evidence="1">Homohexamer. Forms an RuvA(8)-RuvB(12)-Holliday junction (HJ) complex. HJ DNA is sandwiched between 2 RuvA tetramers; dsDNA enters through RuvA and exits via RuvB. An RuvB hexamer assembles on each DNA strand where it exits the tetramer. Each RuvB hexamer is contacted by two RuvA subunits (via domain III) on 2 adjacent RuvB subunits; this complex drives branch migration. In the full resolvosome a probable DNA-RuvA(4)-RuvB(12)-RuvC(2) complex forms which resolves the HJ.</text>
</comment>
<comment type="subcellular location">
    <subcellularLocation>
        <location evidence="1">Cytoplasm</location>
    </subcellularLocation>
</comment>
<comment type="domain">
    <text evidence="1">Has 3 domains, the large (RuvB-L) and small ATPase (RuvB-S) domains and the C-terminal head (RuvB-H) domain. The head domain binds DNA, while the ATPase domains jointly bind ATP, ADP or are empty depending on the state of the subunit in the translocation cycle. During a single DNA translocation step the structure of each domain remains the same, but their relative positions change.</text>
</comment>
<comment type="similarity">
    <text evidence="1">Belongs to the RuvB family.</text>
</comment>
<name>RUVB_BACFR</name>
<feature type="chain" id="PRO_0000165488" description="Holliday junction branch migration complex subunit RuvB">
    <location>
        <begin position="1"/>
        <end position="342"/>
    </location>
</feature>
<feature type="region of interest" description="Large ATPase domain (RuvB-L)" evidence="1">
    <location>
        <begin position="1"/>
        <end position="184"/>
    </location>
</feature>
<feature type="region of interest" description="Small ATPAse domain (RuvB-S)" evidence="1">
    <location>
        <begin position="185"/>
        <end position="255"/>
    </location>
</feature>
<feature type="region of interest" description="Head domain (RuvB-H)" evidence="1">
    <location>
        <begin position="258"/>
        <end position="342"/>
    </location>
</feature>
<feature type="binding site" evidence="1">
    <location>
        <position position="23"/>
    </location>
    <ligand>
        <name>ATP</name>
        <dbReference type="ChEBI" id="CHEBI:30616"/>
    </ligand>
</feature>
<feature type="binding site" evidence="1">
    <location>
        <position position="24"/>
    </location>
    <ligand>
        <name>ATP</name>
        <dbReference type="ChEBI" id="CHEBI:30616"/>
    </ligand>
</feature>
<feature type="binding site" evidence="1">
    <location>
        <position position="65"/>
    </location>
    <ligand>
        <name>ATP</name>
        <dbReference type="ChEBI" id="CHEBI:30616"/>
    </ligand>
</feature>
<feature type="binding site" evidence="1">
    <location>
        <position position="68"/>
    </location>
    <ligand>
        <name>ATP</name>
        <dbReference type="ChEBI" id="CHEBI:30616"/>
    </ligand>
</feature>
<feature type="binding site" evidence="1">
    <location>
        <position position="69"/>
    </location>
    <ligand>
        <name>ATP</name>
        <dbReference type="ChEBI" id="CHEBI:30616"/>
    </ligand>
</feature>
<feature type="binding site" evidence="1">
    <location>
        <position position="69"/>
    </location>
    <ligand>
        <name>Mg(2+)</name>
        <dbReference type="ChEBI" id="CHEBI:18420"/>
    </ligand>
</feature>
<feature type="binding site" evidence="1">
    <location>
        <position position="70"/>
    </location>
    <ligand>
        <name>ATP</name>
        <dbReference type="ChEBI" id="CHEBI:30616"/>
    </ligand>
</feature>
<feature type="binding site" evidence="1">
    <location>
        <begin position="131"/>
        <end position="133"/>
    </location>
    <ligand>
        <name>ATP</name>
        <dbReference type="ChEBI" id="CHEBI:30616"/>
    </ligand>
</feature>
<feature type="binding site" evidence="1">
    <location>
        <position position="174"/>
    </location>
    <ligand>
        <name>ATP</name>
        <dbReference type="ChEBI" id="CHEBI:30616"/>
    </ligand>
</feature>
<feature type="binding site" evidence="1">
    <location>
        <position position="184"/>
    </location>
    <ligand>
        <name>ATP</name>
        <dbReference type="ChEBI" id="CHEBI:30616"/>
    </ligand>
</feature>
<feature type="binding site" evidence="1">
    <location>
        <position position="221"/>
    </location>
    <ligand>
        <name>ATP</name>
        <dbReference type="ChEBI" id="CHEBI:30616"/>
    </ligand>
</feature>
<feature type="binding site" evidence="1">
    <location>
        <position position="313"/>
    </location>
    <ligand>
        <name>DNA</name>
        <dbReference type="ChEBI" id="CHEBI:16991"/>
    </ligand>
</feature>
<feature type="binding site" evidence="1">
    <location>
        <position position="318"/>
    </location>
    <ligand>
        <name>DNA</name>
        <dbReference type="ChEBI" id="CHEBI:16991"/>
    </ligand>
</feature>
<proteinExistence type="inferred from homology"/>
<sequence length="342" mass="37792">MEEDFNIRDHQLTSRERDFENALRPLSFEDFNGQDKVVDNLRIFVKAARLRAEALDHVLLHGPPGLGKTTLSNIIANELGVGFKVTSGPVLDKPGDLAGVLTSLEPNDVLFIDEIHRLSPVVEEYLYSAMEDYRIDIMIDKGPSARSIQIDLNPFTLVGATTRSGLLTAPLRARFGINLHLEYYDDDILSNIISRSAGILDVPCSSQAAGEIASRSRGTPRIANALLRRVRDFAQVKGSGSIDTEIANYALEALNIDKYGLDEIDNKILCTIIDKFKGGPVGLTTIATALGEDAGTIEEVYEPFLIKEGFLKRTPRGREVTELAYKHLGRSLYNSQKTLFND</sequence>